<accession>Q5NR23</accession>
<sequence>MQFLDQAKIYLRSGAGGPGAVSFRHEKYIEYGGPDGGNGGKGGDIVFEAVPGLNTLIDFRYTQHFRAARGASGAGSNKTGAGAKDLVIHVPVGTQVLSEDKEEILHDFTKVGERIIFLKGGDGGRGNASYKSSTNRAPRQHGPGWPAQEAWVWLRLKLLADVGLVGLPNAGKSTFLKATTNAHPKIGNYPFTTLHPQLGVVRRHGQEFVLADIPGLIEGASEGIGIGDRFLGHIERCRILLHLIDASGEDPIAAWHEVQNELALYGAGLAEKPQLLALNKIDSVDEETCAELSQALEEASGQKVLLLSGATGQGLDPILDQLITMTGRAIEKAQESSAQTEKIWSPI</sequence>
<name>OBG_ZYMMO</name>
<dbReference type="EC" id="3.6.5.-" evidence="1"/>
<dbReference type="EMBL" id="AE008692">
    <property type="protein sequence ID" value="AAV88831.1"/>
    <property type="molecule type" value="Genomic_DNA"/>
</dbReference>
<dbReference type="SMR" id="Q5NR23"/>
<dbReference type="STRING" id="264203.ZMO0207"/>
<dbReference type="KEGG" id="zmo:ZMO0207"/>
<dbReference type="eggNOG" id="COG0536">
    <property type="taxonomic scope" value="Bacteria"/>
</dbReference>
<dbReference type="HOGENOM" id="CLU_011747_2_0_5"/>
<dbReference type="Proteomes" id="UP000001173">
    <property type="component" value="Chromosome"/>
</dbReference>
<dbReference type="GO" id="GO:0005737">
    <property type="term" value="C:cytoplasm"/>
    <property type="evidence" value="ECO:0007669"/>
    <property type="project" value="UniProtKB-SubCell"/>
</dbReference>
<dbReference type="GO" id="GO:0005525">
    <property type="term" value="F:GTP binding"/>
    <property type="evidence" value="ECO:0007669"/>
    <property type="project" value="UniProtKB-UniRule"/>
</dbReference>
<dbReference type="GO" id="GO:0003924">
    <property type="term" value="F:GTPase activity"/>
    <property type="evidence" value="ECO:0007669"/>
    <property type="project" value="UniProtKB-UniRule"/>
</dbReference>
<dbReference type="GO" id="GO:0000287">
    <property type="term" value="F:magnesium ion binding"/>
    <property type="evidence" value="ECO:0007669"/>
    <property type="project" value="InterPro"/>
</dbReference>
<dbReference type="GO" id="GO:0042254">
    <property type="term" value="P:ribosome biogenesis"/>
    <property type="evidence" value="ECO:0007669"/>
    <property type="project" value="UniProtKB-UniRule"/>
</dbReference>
<dbReference type="CDD" id="cd01898">
    <property type="entry name" value="Obg"/>
    <property type="match status" value="1"/>
</dbReference>
<dbReference type="FunFam" id="2.70.210.12:FF:000001">
    <property type="entry name" value="GTPase Obg"/>
    <property type="match status" value="1"/>
</dbReference>
<dbReference type="Gene3D" id="2.70.210.12">
    <property type="entry name" value="GTP1/OBG domain"/>
    <property type="match status" value="1"/>
</dbReference>
<dbReference type="Gene3D" id="3.40.50.300">
    <property type="entry name" value="P-loop containing nucleotide triphosphate hydrolases"/>
    <property type="match status" value="1"/>
</dbReference>
<dbReference type="HAMAP" id="MF_01454">
    <property type="entry name" value="GTPase_Obg"/>
    <property type="match status" value="1"/>
</dbReference>
<dbReference type="InterPro" id="IPR031167">
    <property type="entry name" value="G_OBG"/>
</dbReference>
<dbReference type="InterPro" id="IPR006073">
    <property type="entry name" value="GTP-bd"/>
</dbReference>
<dbReference type="InterPro" id="IPR014100">
    <property type="entry name" value="GTP-bd_Obg/CgtA"/>
</dbReference>
<dbReference type="InterPro" id="IPR006074">
    <property type="entry name" value="GTP1-OBG_CS"/>
</dbReference>
<dbReference type="InterPro" id="IPR006169">
    <property type="entry name" value="GTP1_OBG_dom"/>
</dbReference>
<dbReference type="InterPro" id="IPR036726">
    <property type="entry name" value="GTP1_OBG_dom_sf"/>
</dbReference>
<dbReference type="InterPro" id="IPR045086">
    <property type="entry name" value="OBG_GTPase"/>
</dbReference>
<dbReference type="InterPro" id="IPR027417">
    <property type="entry name" value="P-loop_NTPase"/>
</dbReference>
<dbReference type="NCBIfam" id="TIGR02729">
    <property type="entry name" value="Obg_CgtA"/>
    <property type="match status" value="1"/>
</dbReference>
<dbReference type="NCBIfam" id="NF008955">
    <property type="entry name" value="PRK12297.1"/>
    <property type="match status" value="1"/>
</dbReference>
<dbReference type="NCBIfam" id="NF008956">
    <property type="entry name" value="PRK12299.1"/>
    <property type="match status" value="1"/>
</dbReference>
<dbReference type="PANTHER" id="PTHR11702">
    <property type="entry name" value="DEVELOPMENTALLY REGULATED GTP-BINDING PROTEIN-RELATED"/>
    <property type="match status" value="1"/>
</dbReference>
<dbReference type="PANTHER" id="PTHR11702:SF31">
    <property type="entry name" value="MITOCHONDRIAL RIBOSOME-ASSOCIATED GTPASE 2"/>
    <property type="match status" value="1"/>
</dbReference>
<dbReference type="Pfam" id="PF01018">
    <property type="entry name" value="GTP1_OBG"/>
    <property type="match status" value="1"/>
</dbReference>
<dbReference type="Pfam" id="PF01926">
    <property type="entry name" value="MMR_HSR1"/>
    <property type="match status" value="1"/>
</dbReference>
<dbReference type="PIRSF" id="PIRSF002401">
    <property type="entry name" value="GTP_bd_Obg/CgtA"/>
    <property type="match status" value="1"/>
</dbReference>
<dbReference type="PRINTS" id="PR00326">
    <property type="entry name" value="GTP1OBG"/>
</dbReference>
<dbReference type="SUPFAM" id="SSF82051">
    <property type="entry name" value="Obg GTP-binding protein N-terminal domain"/>
    <property type="match status" value="1"/>
</dbReference>
<dbReference type="SUPFAM" id="SSF52540">
    <property type="entry name" value="P-loop containing nucleoside triphosphate hydrolases"/>
    <property type="match status" value="1"/>
</dbReference>
<dbReference type="PROSITE" id="PS51710">
    <property type="entry name" value="G_OBG"/>
    <property type="match status" value="1"/>
</dbReference>
<dbReference type="PROSITE" id="PS00905">
    <property type="entry name" value="GTP1_OBG"/>
    <property type="match status" value="1"/>
</dbReference>
<dbReference type="PROSITE" id="PS51883">
    <property type="entry name" value="OBG"/>
    <property type="match status" value="1"/>
</dbReference>
<evidence type="ECO:0000255" key="1">
    <source>
        <dbReference type="HAMAP-Rule" id="MF_01454"/>
    </source>
</evidence>
<evidence type="ECO:0000255" key="2">
    <source>
        <dbReference type="PROSITE-ProRule" id="PRU01231"/>
    </source>
</evidence>
<evidence type="ECO:0000256" key="3">
    <source>
        <dbReference type="SAM" id="MobiDB-lite"/>
    </source>
</evidence>
<reference key="1">
    <citation type="journal article" date="2005" name="Nat. Biotechnol.">
        <title>The genome sequence of the ethanologenic bacterium Zymomonas mobilis ZM4.</title>
        <authorList>
            <person name="Seo J.-S."/>
            <person name="Chong H."/>
            <person name="Park H.S."/>
            <person name="Yoon K.-O."/>
            <person name="Jung C."/>
            <person name="Kim J.J."/>
            <person name="Hong J.H."/>
            <person name="Kim H."/>
            <person name="Kim J.-H."/>
            <person name="Kil J.-I."/>
            <person name="Park C.J."/>
            <person name="Oh H.-M."/>
            <person name="Lee J.-S."/>
            <person name="Jin S.-J."/>
            <person name="Um H.-W."/>
            <person name="Lee H.-J."/>
            <person name="Oh S.-J."/>
            <person name="Kim J.Y."/>
            <person name="Kang H.L."/>
            <person name="Lee S.Y."/>
            <person name="Lee K.J."/>
            <person name="Kang H.S."/>
        </authorList>
    </citation>
    <scope>NUCLEOTIDE SEQUENCE [LARGE SCALE GENOMIC DNA]</scope>
    <source>
        <strain>ATCC 31821 / ZM4 / CP4</strain>
    </source>
</reference>
<protein>
    <recommendedName>
        <fullName evidence="1">GTPase Obg</fullName>
        <ecNumber evidence="1">3.6.5.-</ecNumber>
    </recommendedName>
    <alternativeName>
        <fullName evidence="1">GTP-binding protein Obg</fullName>
    </alternativeName>
</protein>
<feature type="chain" id="PRO_0000386415" description="GTPase Obg">
    <location>
        <begin position="1"/>
        <end position="347"/>
    </location>
</feature>
<feature type="domain" description="Obg" evidence="2">
    <location>
        <begin position="1"/>
        <end position="159"/>
    </location>
</feature>
<feature type="domain" description="OBG-type G" evidence="1">
    <location>
        <begin position="160"/>
        <end position="327"/>
    </location>
</feature>
<feature type="region of interest" description="Disordered" evidence="3">
    <location>
        <begin position="124"/>
        <end position="144"/>
    </location>
</feature>
<feature type="binding site" evidence="1">
    <location>
        <begin position="166"/>
        <end position="173"/>
    </location>
    <ligand>
        <name>GTP</name>
        <dbReference type="ChEBI" id="CHEBI:37565"/>
    </ligand>
</feature>
<feature type="binding site" evidence="1">
    <location>
        <position position="173"/>
    </location>
    <ligand>
        <name>Mg(2+)</name>
        <dbReference type="ChEBI" id="CHEBI:18420"/>
    </ligand>
</feature>
<feature type="binding site" evidence="1">
    <location>
        <begin position="191"/>
        <end position="195"/>
    </location>
    <ligand>
        <name>GTP</name>
        <dbReference type="ChEBI" id="CHEBI:37565"/>
    </ligand>
</feature>
<feature type="binding site" evidence="1">
    <location>
        <position position="193"/>
    </location>
    <ligand>
        <name>Mg(2+)</name>
        <dbReference type="ChEBI" id="CHEBI:18420"/>
    </ligand>
</feature>
<feature type="binding site" evidence="1">
    <location>
        <begin position="212"/>
        <end position="215"/>
    </location>
    <ligand>
        <name>GTP</name>
        <dbReference type="ChEBI" id="CHEBI:37565"/>
    </ligand>
</feature>
<feature type="binding site" evidence="1">
    <location>
        <begin position="279"/>
        <end position="282"/>
    </location>
    <ligand>
        <name>GTP</name>
        <dbReference type="ChEBI" id="CHEBI:37565"/>
    </ligand>
</feature>
<feature type="binding site" evidence="1">
    <location>
        <begin position="308"/>
        <end position="310"/>
    </location>
    <ligand>
        <name>GTP</name>
        <dbReference type="ChEBI" id="CHEBI:37565"/>
    </ligand>
</feature>
<organism>
    <name type="scientific">Zymomonas mobilis subsp. mobilis (strain ATCC 31821 / ZM4 / CP4)</name>
    <dbReference type="NCBI Taxonomy" id="264203"/>
    <lineage>
        <taxon>Bacteria</taxon>
        <taxon>Pseudomonadati</taxon>
        <taxon>Pseudomonadota</taxon>
        <taxon>Alphaproteobacteria</taxon>
        <taxon>Sphingomonadales</taxon>
        <taxon>Zymomonadaceae</taxon>
        <taxon>Zymomonas</taxon>
    </lineage>
</organism>
<proteinExistence type="inferred from homology"/>
<keyword id="KW-0963">Cytoplasm</keyword>
<keyword id="KW-0342">GTP-binding</keyword>
<keyword id="KW-0378">Hydrolase</keyword>
<keyword id="KW-0460">Magnesium</keyword>
<keyword id="KW-0479">Metal-binding</keyword>
<keyword id="KW-0547">Nucleotide-binding</keyword>
<keyword id="KW-1185">Reference proteome</keyword>
<gene>
    <name evidence="1" type="primary">obg</name>
    <name type="ordered locus">ZMO0207</name>
</gene>
<comment type="function">
    <text evidence="1">An essential GTPase which binds GTP, GDP and possibly (p)ppGpp with moderate affinity, with high nucleotide exchange rates and a fairly low GTP hydrolysis rate. Plays a role in control of the cell cycle, stress response, ribosome biogenesis and in those bacteria that undergo differentiation, in morphogenesis control.</text>
</comment>
<comment type="cofactor">
    <cofactor evidence="1">
        <name>Mg(2+)</name>
        <dbReference type="ChEBI" id="CHEBI:18420"/>
    </cofactor>
</comment>
<comment type="subunit">
    <text evidence="1">Monomer.</text>
</comment>
<comment type="subcellular location">
    <subcellularLocation>
        <location evidence="1">Cytoplasm</location>
    </subcellularLocation>
</comment>
<comment type="similarity">
    <text evidence="1">Belongs to the TRAFAC class OBG-HflX-like GTPase superfamily. OBG GTPase family.</text>
</comment>